<comment type="catalytic activity">
    <reaction evidence="1">
        <text>Hydrolysis of terminal, non-reducing beta-D-glucosyl residues with release of beta-D-glucose.</text>
        <dbReference type="EC" id="3.2.1.21"/>
    </reaction>
</comment>
<comment type="similarity">
    <text evidence="5">Belongs to the glycosyl hydrolase 1 family.</text>
</comment>
<comment type="caution">
    <text evidence="5">Could be the product of a pseudogene.</text>
</comment>
<comment type="sequence caution" evidence="5">
    <conflict type="erroneous gene model prediction">
        <sequence resource="EMBL-CDS" id="BAF15218"/>
    </conflict>
</comment>
<comment type="sequence caution" evidence="5">
    <conflict type="erroneous gene model prediction">
        <sequence resource="EMBL-CDS" id="CAE01909"/>
    </conflict>
</comment>
<comment type="sequence caution" evidence="5">
    <conflict type="erroneous gene model prediction">
        <sequence resource="EMBL-CDS" id="CAE54545"/>
    </conflict>
</comment>
<proteinExistence type="uncertain"/>
<keyword id="KW-1015">Disulfide bond</keyword>
<keyword id="KW-0325">Glycoprotein</keyword>
<keyword id="KW-0326">Glycosidase</keyword>
<keyword id="KW-0378">Hydrolase</keyword>
<keyword id="KW-1185">Reference proteome</keyword>
<keyword id="KW-0732">Signal</keyword>
<reference key="1">
    <citation type="journal article" date="2002" name="Nature">
        <title>Sequence and analysis of rice chromosome 4.</title>
        <authorList>
            <person name="Feng Q."/>
            <person name="Zhang Y."/>
            <person name="Hao P."/>
            <person name="Wang S."/>
            <person name="Fu G."/>
            <person name="Huang Y."/>
            <person name="Li Y."/>
            <person name="Zhu J."/>
            <person name="Liu Y."/>
            <person name="Hu X."/>
            <person name="Jia P."/>
            <person name="Zhang Y."/>
            <person name="Zhao Q."/>
            <person name="Ying K."/>
            <person name="Yu S."/>
            <person name="Tang Y."/>
            <person name="Weng Q."/>
            <person name="Zhang L."/>
            <person name="Lu Y."/>
            <person name="Mu J."/>
            <person name="Lu Y."/>
            <person name="Zhang L.S."/>
            <person name="Yu Z."/>
            <person name="Fan D."/>
            <person name="Liu X."/>
            <person name="Lu T."/>
            <person name="Li C."/>
            <person name="Wu Y."/>
            <person name="Sun T."/>
            <person name="Lei H."/>
            <person name="Li T."/>
            <person name="Hu H."/>
            <person name="Guan J."/>
            <person name="Wu M."/>
            <person name="Zhang R."/>
            <person name="Zhou B."/>
            <person name="Chen Z."/>
            <person name="Chen L."/>
            <person name="Jin Z."/>
            <person name="Wang R."/>
            <person name="Yin H."/>
            <person name="Cai Z."/>
            <person name="Ren S."/>
            <person name="Lv G."/>
            <person name="Gu W."/>
            <person name="Zhu G."/>
            <person name="Tu Y."/>
            <person name="Jia J."/>
            <person name="Zhang Y."/>
            <person name="Chen J."/>
            <person name="Kang H."/>
            <person name="Chen X."/>
            <person name="Shao C."/>
            <person name="Sun Y."/>
            <person name="Hu Q."/>
            <person name="Zhang X."/>
            <person name="Zhang W."/>
            <person name="Wang L."/>
            <person name="Ding C."/>
            <person name="Sheng H."/>
            <person name="Gu J."/>
            <person name="Chen S."/>
            <person name="Ni L."/>
            <person name="Zhu F."/>
            <person name="Chen W."/>
            <person name="Lan L."/>
            <person name="Lai Y."/>
            <person name="Cheng Z."/>
            <person name="Gu M."/>
            <person name="Jiang J."/>
            <person name="Li J."/>
            <person name="Hong G."/>
            <person name="Xue Y."/>
            <person name="Han B."/>
        </authorList>
    </citation>
    <scope>NUCLEOTIDE SEQUENCE [LARGE SCALE GENOMIC DNA]</scope>
    <source>
        <strain>cv. Nipponbare</strain>
    </source>
</reference>
<reference key="2">
    <citation type="journal article" date="2005" name="Nature">
        <title>The map-based sequence of the rice genome.</title>
        <authorList>
            <consortium name="International rice genome sequencing project (IRGSP)"/>
        </authorList>
    </citation>
    <scope>NUCLEOTIDE SEQUENCE [LARGE SCALE GENOMIC DNA]</scope>
    <source>
        <strain>cv. Nipponbare</strain>
    </source>
</reference>
<reference key="3">
    <citation type="journal article" date="2008" name="Nucleic Acids Res.">
        <title>The rice annotation project database (RAP-DB): 2008 update.</title>
        <authorList>
            <consortium name="The rice annotation project (RAP)"/>
        </authorList>
    </citation>
    <scope>GENOME REANNOTATION</scope>
    <source>
        <strain>cv. Nipponbare</strain>
    </source>
</reference>
<reference key="4">
    <citation type="journal article" date="2013" name="Rice">
        <title>Improvement of the Oryza sativa Nipponbare reference genome using next generation sequence and optical map data.</title>
        <authorList>
            <person name="Kawahara Y."/>
            <person name="de la Bastide M."/>
            <person name="Hamilton J.P."/>
            <person name="Kanamori H."/>
            <person name="McCombie W.R."/>
            <person name="Ouyang S."/>
            <person name="Schwartz D.C."/>
            <person name="Tanaka T."/>
            <person name="Wu J."/>
            <person name="Zhou S."/>
            <person name="Childs K.L."/>
            <person name="Davidson R.M."/>
            <person name="Lin H."/>
            <person name="Quesada-Ocampo L."/>
            <person name="Vaillancourt B."/>
            <person name="Sakai H."/>
            <person name="Lee S.S."/>
            <person name="Kim J."/>
            <person name="Numa H."/>
            <person name="Itoh T."/>
            <person name="Buell C.R."/>
            <person name="Matsumoto T."/>
        </authorList>
    </citation>
    <scope>GENOME REANNOTATION</scope>
    <source>
        <strain>cv. Nipponbare</strain>
    </source>
</reference>
<reference key="5">
    <citation type="journal article" date="2006" name="BMC Plant Biol.">
        <title>Analysis of rice glycosyl hydrolase family 1 and expression of Os4bglu12 beta-glucosidase.</title>
        <authorList>
            <person name="Opassiri R."/>
            <person name="Pomthong B."/>
            <person name="Onkoksoong T."/>
            <person name="Akiyama T."/>
            <person name="Esen A."/>
            <person name="Ketudat Cairns J.R."/>
        </authorList>
    </citation>
    <scope>GENE FAMILY</scope>
    <scope>NOMENCLATURE</scope>
</reference>
<feature type="signal peptide" evidence="3">
    <location>
        <begin position="1"/>
        <end position="27"/>
    </location>
</feature>
<feature type="chain" id="PRO_0000390334" description="Putative beta-glucosidase 17">
    <location>
        <begin position="28"/>
        <end position="302"/>
    </location>
</feature>
<feature type="active site" description="Proton donor" evidence="2">
    <location>
        <position position="195"/>
    </location>
</feature>
<feature type="binding site" evidence="2">
    <location>
        <position position="47"/>
    </location>
    <ligand>
        <name>a beta-D-glucoside</name>
        <dbReference type="ChEBI" id="CHEBI:22798"/>
    </ligand>
</feature>
<feature type="binding site" evidence="2">
    <location>
        <position position="149"/>
    </location>
    <ligand>
        <name>a beta-D-glucoside</name>
        <dbReference type="ChEBI" id="CHEBI:22798"/>
    </ligand>
</feature>
<feature type="binding site" evidence="2">
    <location>
        <begin position="194"/>
        <end position="195"/>
    </location>
    <ligand>
        <name>a beta-D-glucoside</name>
        <dbReference type="ChEBI" id="CHEBI:22798"/>
    </ligand>
</feature>
<feature type="glycosylation site" description="N-linked (GlcNAc...) asparagine" evidence="4">
    <location>
        <position position="274"/>
    </location>
</feature>
<feature type="disulfide bond" evidence="2">
    <location>
        <begin position="214"/>
        <end position="221"/>
    </location>
</feature>
<protein>
    <recommendedName>
        <fullName>Putative beta-glucosidase 17</fullName>
        <shortName>Os4bglu17</shortName>
        <ecNumber evidence="1">3.2.1.21</ecNumber>
    </recommendedName>
</protein>
<sequence length="302" mass="33659">MMAVAAATRIAVVVVAALAALAPGARGLRRDDFPVGFLFGAATSAYQVGWSIMGCSHGGWVWSLPFLVDPGRISDRRNGDVADDHYHRYTEDVEILHNLGVNSYRFSISWARILPSRFGGVNSAGIAFYNRLIDALLQKGIQPFVTLNHFDIPQELEIRYGGWLGAGIREEFGYYSDVCFKAFGDRVRFWTTFNEPNLITKFQFMLGAYPPNRCSPPFGSCNSGDSRREPYTAAHNILLSHAAAVHNYKTNYQAKQGGSIGIVVAMKWYEPLTNSTEDVRAARRALAFEVDWYGFACYLPFL</sequence>
<accession>Q7XSK1</accession>
<accession>Q0JBR9</accession>
<organism>
    <name type="scientific">Oryza sativa subsp. japonica</name>
    <name type="common">Rice</name>
    <dbReference type="NCBI Taxonomy" id="39947"/>
    <lineage>
        <taxon>Eukaryota</taxon>
        <taxon>Viridiplantae</taxon>
        <taxon>Streptophyta</taxon>
        <taxon>Embryophyta</taxon>
        <taxon>Tracheophyta</taxon>
        <taxon>Spermatophyta</taxon>
        <taxon>Magnoliopsida</taxon>
        <taxon>Liliopsida</taxon>
        <taxon>Poales</taxon>
        <taxon>Poaceae</taxon>
        <taxon>BOP clade</taxon>
        <taxon>Oryzoideae</taxon>
        <taxon>Oryzeae</taxon>
        <taxon>Oryzinae</taxon>
        <taxon>Oryza</taxon>
        <taxon>Oryza sativa</taxon>
    </lineage>
</organism>
<evidence type="ECO:0000250" key="1">
    <source>
        <dbReference type="UniProtKB" id="Q75I94"/>
    </source>
</evidence>
<evidence type="ECO:0000250" key="2">
    <source>
        <dbReference type="UniProtKB" id="Q7XSK0"/>
    </source>
</evidence>
<evidence type="ECO:0000255" key="3"/>
<evidence type="ECO:0000255" key="4">
    <source>
        <dbReference type="PROSITE-ProRule" id="PRU00498"/>
    </source>
</evidence>
<evidence type="ECO:0000305" key="5"/>
<dbReference type="EC" id="3.2.1.21" evidence="1"/>
<dbReference type="EMBL" id="AL606622">
    <property type="protein sequence ID" value="CAE54545.1"/>
    <property type="status" value="ALT_SEQ"/>
    <property type="molecule type" value="Genomic_DNA"/>
</dbReference>
<dbReference type="EMBL" id="AL606659">
    <property type="protein sequence ID" value="CAE01909.2"/>
    <property type="status" value="ALT_SEQ"/>
    <property type="molecule type" value="Genomic_DNA"/>
</dbReference>
<dbReference type="EMBL" id="AP008210">
    <property type="protein sequence ID" value="BAF15218.2"/>
    <property type="status" value="ALT_SEQ"/>
    <property type="molecule type" value="Genomic_DNA"/>
</dbReference>
<dbReference type="EMBL" id="AP014960">
    <property type="status" value="NOT_ANNOTATED_CDS"/>
    <property type="molecule type" value="Genomic_DNA"/>
</dbReference>
<dbReference type="SMR" id="Q7XSK1"/>
<dbReference type="FunCoup" id="Q7XSK1">
    <property type="interactions" value="6"/>
</dbReference>
<dbReference type="STRING" id="39947.Q7XSK1"/>
<dbReference type="CAZy" id="GH1">
    <property type="family name" value="Glycoside Hydrolase Family 1"/>
</dbReference>
<dbReference type="GlyCosmos" id="Q7XSK1">
    <property type="glycosylation" value="1 site, No reported glycans"/>
</dbReference>
<dbReference type="PaxDb" id="39947-Q7XSK1"/>
<dbReference type="KEGG" id="dosa:Os04g0513700"/>
<dbReference type="eggNOG" id="KOG0626">
    <property type="taxonomic scope" value="Eukaryota"/>
</dbReference>
<dbReference type="InParanoid" id="Q7XSK1"/>
<dbReference type="Proteomes" id="UP000000763">
    <property type="component" value="Chromosome 4"/>
</dbReference>
<dbReference type="Proteomes" id="UP000059680">
    <property type="component" value="Chromosome 4"/>
</dbReference>
<dbReference type="GO" id="GO:0033907">
    <property type="term" value="F:beta-D-fucosidase activity"/>
    <property type="evidence" value="ECO:0007669"/>
    <property type="project" value="UniProtKB-ARBA"/>
</dbReference>
<dbReference type="GO" id="GO:0004565">
    <property type="term" value="F:beta-galactosidase activity"/>
    <property type="evidence" value="ECO:0007669"/>
    <property type="project" value="UniProtKB-ARBA"/>
</dbReference>
<dbReference type="GO" id="GO:0008422">
    <property type="term" value="F:beta-glucosidase activity"/>
    <property type="evidence" value="ECO:0000318"/>
    <property type="project" value="GO_Central"/>
</dbReference>
<dbReference type="GO" id="GO:0005975">
    <property type="term" value="P:carbohydrate metabolic process"/>
    <property type="evidence" value="ECO:0007669"/>
    <property type="project" value="InterPro"/>
</dbReference>
<dbReference type="FunFam" id="3.20.20.80:FF:000294">
    <property type="entry name" value="Beta-glucosidase 11"/>
    <property type="match status" value="1"/>
</dbReference>
<dbReference type="Gene3D" id="3.20.20.80">
    <property type="entry name" value="Glycosidases"/>
    <property type="match status" value="1"/>
</dbReference>
<dbReference type="InterPro" id="IPR001360">
    <property type="entry name" value="Glyco_hydro_1"/>
</dbReference>
<dbReference type="InterPro" id="IPR017853">
    <property type="entry name" value="Glycoside_hydrolase_SF"/>
</dbReference>
<dbReference type="PANTHER" id="PTHR10353:SF159">
    <property type="entry name" value="BETA-GLUCOSIDASE 16"/>
    <property type="match status" value="1"/>
</dbReference>
<dbReference type="PANTHER" id="PTHR10353">
    <property type="entry name" value="GLYCOSYL HYDROLASE"/>
    <property type="match status" value="1"/>
</dbReference>
<dbReference type="Pfam" id="PF00232">
    <property type="entry name" value="Glyco_hydro_1"/>
    <property type="match status" value="1"/>
</dbReference>
<dbReference type="SUPFAM" id="SSF51445">
    <property type="entry name" value="(Trans)glycosidases"/>
    <property type="match status" value="1"/>
</dbReference>
<name>BGL17_ORYSJ</name>
<gene>
    <name type="primary">BGLU17</name>
    <name type="ordered locus">Os04g0513700</name>
    <name type="ordered locus">LOC_Os04g43400</name>
    <name type="ORF">OSJNBa0004N05.25</name>
    <name type="ORF">OSJNBb0070J16.2</name>
</gene>